<protein>
    <recommendedName>
        <fullName evidence="1">NADH-quinone oxidoreductase subunit I</fullName>
        <ecNumber evidence="1">7.1.1.-</ecNumber>
    </recommendedName>
    <alternativeName>
        <fullName evidence="1">NADH dehydrogenase I subunit I</fullName>
    </alternativeName>
    <alternativeName>
        <fullName evidence="1">NDH-1 subunit I</fullName>
    </alternativeName>
</protein>
<gene>
    <name evidence="1" type="primary">nuoI</name>
    <name type="ordered locus">MSMEG_2055</name>
    <name type="ordered locus">MSMEI_2010</name>
</gene>
<dbReference type="EC" id="7.1.1.-" evidence="1"/>
<dbReference type="EMBL" id="CP000480">
    <property type="protein sequence ID" value="ABK69968.1"/>
    <property type="molecule type" value="Genomic_DNA"/>
</dbReference>
<dbReference type="EMBL" id="CP001663">
    <property type="protein sequence ID" value="AFP38481.1"/>
    <property type="molecule type" value="Genomic_DNA"/>
</dbReference>
<dbReference type="RefSeq" id="WP_003893424.1">
    <property type="nucleotide sequence ID" value="NZ_SIJM01000021.1"/>
</dbReference>
<dbReference type="RefSeq" id="YP_886416.1">
    <property type="nucleotide sequence ID" value="NC_008596.1"/>
</dbReference>
<dbReference type="PDB" id="8E9G">
    <property type="method" value="EM"/>
    <property type="resolution" value="2.60 A"/>
    <property type="chains" value="I=1-180"/>
</dbReference>
<dbReference type="PDB" id="8E9H">
    <property type="method" value="EM"/>
    <property type="resolution" value="2.70 A"/>
    <property type="chains" value="I=1-180"/>
</dbReference>
<dbReference type="PDB" id="8E9I">
    <property type="method" value="EM"/>
    <property type="resolution" value="2.80 A"/>
    <property type="chains" value="I=1-180"/>
</dbReference>
<dbReference type="PDBsum" id="8E9G"/>
<dbReference type="PDBsum" id="8E9H"/>
<dbReference type="PDBsum" id="8E9I"/>
<dbReference type="EMDB" id="EMD-27963"/>
<dbReference type="EMDB" id="EMD-27964"/>
<dbReference type="EMDB" id="EMD-27965"/>
<dbReference type="SMR" id="A0QU28"/>
<dbReference type="STRING" id="246196.MSMEG_2055"/>
<dbReference type="PaxDb" id="246196-MSMEI_2010"/>
<dbReference type="GeneID" id="93456859"/>
<dbReference type="KEGG" id="msb:LJ00_10245"/>
<dbReference type="KEGG" id="msg:MSMEI_2010"/>
<dbReference type="KEGG" id="msm:MSMEG_2055"/>
<dbReference type="PATRIC" id="fig|246196.19.peg.2031"/>
<dbReference type="eggNOG" id="COG1143">
    <property type="taxonomic scope" value="Bacteria"/>
</dbReference>
<dbReference type="OrthoDB" id="9808559at2"/>
<dbReference type="Proteomes" id="UP000000757">
    <property type="component" value="Chromosome"/>
</dbReference>
<dbReference type="Proteomes" id="UP000006158">
    <property type="component" value="Chromosome"/>
</dbReference>
<dbReference type="GO" id="GO:0005886">
    <property type="term" value="C:plasma membrane"/>
    <property type="evidence" value="ECO:0007669"/>
    <property type="project" value="UniProtKB-SubCell"/>
</dbReference>
<dbReference type="GO" id="GO:0051539">
    <property type="term" value="F:4 iron, 4 sulfur cluster binding"/>
    <property type="evidence" value="ECO:0007669"/>
    <property type="project" value="UniProtKB-KW"/>
</dbReference>
<dbReference type="GO" id="GO:0005506">
    <property type="term" value="F:iron ion binding"/>
    <property type="evidence" value="ECO:0007669"/>
    <property type="project" value="UniProtKB-UniRule"/>
</dbReference>
<dbReference type="GO" id="GO:0050136">
    <property type="term" value="F:NADH:ubiquinone reductase (non-electrogenic) activity"/>
    <property type="evidence" value="ECO:0007669"/>
    <property type="project" value="UniProtKB-UniRule"/>
</dbReference>
<dbReference type="GO" id="GO:0048038">
    <property type="term" value="F:quinone binding"/>
    <property type="evidence" value="ECO:0007669"/>
    <property type="project" value="UniProtKB-KW"/>
</dbReference>
<dbReference type="GO" id="GO:0009060">
    <property type="term" value="P:aerobic respiration"/>
    <property type="evidence" value="ECO:0007669"/>
    <property type="project" value="TreeGrafter"/>
</dbReference>
<dbReference type="FunFam" id="3.30.70.3270:FF:000007">
    <property type="entry name" value="NADH-quinone oxidoreductase subunit I"/>
    <property type="match status" value="1"/>
</dbReference>
<dbReference type="Gene3D" id="3.30.70.3270">
    <property type="match status" value="1"/>
</dbReference>
<dbReference type="HAMAP" id="MF_01351">
    <property type="entry name" value="NDH1_NuoI"/>
    <property type="match status" value="1"/>
</dbReference>
<dbReference type="InterPro" id="IPR017896">
    <property type="entry name" value="4Fe4S_Fe-S-bd"/>
</dbReference>
<dbReference type="InterPro" id="IPR017900">
    <property type="entry name" value="4Fe4S_Fe_S_CS"/>
</dbReference>
<dbReference type="InterPro" id="IPR010226">
    <property type="entry name" value="NADH_quinone_OxRdtase_chainI"/>
</dbReference>
<dbReference type="NCBIfam" id="TIGR01971">
    <property type="entry name" value="NuoI"/>
    <property type="match status" value="1"/>
</dbReference>
<dbReference type="NCBIfam" id="NF004537">
    <property type="entry name" value="PRK05888.1-3"/>
    <property type="match status" value="1"/>
</dbReference>
<dbReference type="PANTHER" id="PTHR10849:SF20">
    <property type="entry name" value="NADH DEHYDROGENASE [UBIQUINONE] IRON-SULFUR PROTEIN 8, MITOCHONDRIAL"/>
    <property type="match status" value="1"/>
</dbReference>
<dbReference type="PANTHER" id="PTHR10849">
    <property type="entry name" value="NADH DEHYDROGENASE UBIQUINONE IRON-SULFUR PROTEIN 8, MITOCHONDRIAL"/>
    <property type="match status" value="1"/>
</dbReference>
<dbReference type="Pfam" id="PF12838">
    <property type="entry name" value="Fer4_7"/>
    <property type="match status" value="1"/>
</dbReference>
<dbReference type="SUPFAM" id="SSF54862">
    <property type="entry name" value="4Fe-4S ferredoxins"/>
    <property type="match status" value="1"/>
</dbReference>
<dbReference type="PROSITE" id="PS00198">
    <property type="entry name" value="4FE4S_FER_1"/>
    <property type="match status" value="2"/>
</dbReference>
<dbReference type="PROSITE" id="PS51379">
    <property type="entry name" value="4FE4S_FER_2"/>
    <property type="match status" value="2"/>
</dbReference>
<keyword id="KW-0002">3D-structure</keyword>
<keyword id="KW-0004">4Fe-4S</keyword>
<keyword id="KW-1003">Cell membrane</keyword>
<keyword id="KW-0408">Iron</keyword>
<keyword id="KW-0411">Iron-sulfur</keyword>
<keyword id="KW-0472">Membrane</keyword>
<keyword id="KW-0479">Metal-binding</keyword>
<keyword id="KW-0520">NAD</keyword>
<keyword id="KW-0874">Quinone</keyword>
<keyword id="KW-1185">Reference proteome</keyword>
<keyword id="KW-0677">Repeat</keyword>
<keyword id="KW-1278">Translocase</keyword>
<comment type="function">
    <text evidence="1">NDH-1 shuttles electrons from NADH, via FMN and iron-sulfur (Fe-S) centers, to quinones in the respiratory chain. The immediate electron acceptor for the enzyme in this species is believed to be menaquinone. Couples the redox reaction to proton translocation (for every two electrons transferred, four hydrogen ions are translocated across the cytoplasmic membrane), and thus conserves the redox energy in a proton gradient.</text>
</comment>
<comment type="catalytic activity">
    <reaction evidence="1">
        <text>a quinone + NADH + 5 H(+)(in) = a quinol + NAD(+) + 4 H(+)(out)</text>
        <dbReference type="Rhea" id="RHEA:57888"/>
        <dbReference type="ChEBI" id="CHEBI:15378"/>
        <dbReference type="ChEBI" id="CHEBI:24646"/>
        <dbReference type="ChEBI" id="CHEBI:57540"/>
        <dbReference type="ChEBI" id="CHEBI:57945"/>
        <dbReference type="ChEBI" id="CHEBI:132124"/>
    </reaction>
</comment>
<comment type="cofactor">
    <cofactor evidence="1">
        <name>[4Fe-4S] cluster</name>
        <dbReference type="ChEBI" id="CHEBI:49883"/>
    </cofactor>
    <text evidence="1">Binds 2 [4Fe-4S] clusters per subunit.</text>
</comment>
<comment type="subunit">
    <text evidence="1">NDH-1 is composed of 14 different subunits. Subunits NuoA, H, J, K, L, M, N constitute the membrane sector of the complex.</text>
</comment>
<comment type="subcellular location">
    <subcellularLocation>
        <location evidence="1">Cell membrane</location>
        <topology evidence="1">Peripheral membrane protein</topology>
    </subcellularLocation>
</comment>
<comment type="similarity">
    <text evidence="1">Belongs to the complex I 23 kDa subunit family.</text>
</comment>
<sequence>MPKFLDALAGFAVTLGSMFKKPITEGYPEKPGPVAPRYHGRHQLNRYPDGLEKCIGCELCAWACPADAIYVEGADNTADERYSPGERYGRVYQINYLRCIGCGLCIEACPTRALTMTTEYEMADDNRADLIWGKDKLLAPLQEGMQAPPHDMAPGKTDDDYYLGNVTPITPVPSGTEDAR</sequence>
<organism>
    <name type="scientific">Mycolicibacterium smegmatis (strain ATCC 700084 / mc(2)155)</name>
    <name type="common">Mycobacterium smegmatis</name>
    <dbReference type="NCBI Taxonomy" id="246196"/>
    <lineage>
        <taxon>Bacteria</taxon>
        <taxon>Bacillati</taxon>
        <taxon>Actinomycetota</taxon>
        <taxon>Actinomycetes</taxon>
        <taxon>Mycobacteriales</taxon>
        <taxon>Mycobacteriaceae</taxon>
        <taxon>Mycolicibacterium</taxon>
    </lineage>
</organism>
<name>NUOI_MYCS2</name>
<reference key="1">
    <citation type="submission" date="2006-10" db="EMBL/GenBank/DDBJ databases">
        <authorList>
            <person name="Fleischmann R.D."/>
            <person name="Dodson R.J."/>
            <person name="Haft D.H."/>
            <person name="Merkel J.S."/>
            <person name="Nelson W.C."/>
            <person name="Fraser C.M."/>
        </authorList>
    </citation>
    <scope>NUCLEOTIDE SEQUENCE [LARGE SCALE GENOMIC DNA]</scope>
    <source>
        <strain>ATCC 700084 / mc(2)155</strain>
    </source>
</reference>
<reference key="2">
    <citation type="journal article" date="2007" name="Genome Biol.">
        <title>Interrupted coding sequences in Mycobacterium smegmatis: authentic mutations or sequencing errors?</title>
        <authorList>
            <person name="Deshayes C."/>
            <person name="Perrodou E."/>
            <person name="Gallien S."/>
            <person name="Euphrasie D."/>
            <person name="Schaeffer C."/>
            <person name="Van-Dorsselaer A."/>
            <person name="Poch O."/>
            <person name="Lecompte O."/>
            <person name="Reyrat J.-M."/>
        </authorList>
    </citation>
    <scope>NUCLEOTIDE SEQUENCE [LARGE SCALE GENOMIC DNA]</scope>
    <source>
        <strain>ATCC 700084 / mc(2)155</strain>
    </source>
</reference>
<reference key="3">
    <citation type="journal article" date="2009" name="Genome Res.">
        <title>Ortho-proteogenomics: multiple proteomes investigation through orthology and a new MS-based protocol.</title>
        <authorList>
            <person name="Gallien S."/>
            <person name="Perrodou E."/>
            <person name="Carapito C."/>
            <person name="Deshayes C."/>
            <person name="Reyrat J.-M."/>
            <person name="Van Dorsselaer A."/>
            <person name="Poch O."/>
            <person name="Schaeffer C."/>
            <person name="Lecompte O."/>
        </authorList>
    </citation>
    <scope>NUCLEOTIDE SEQUENCE [LARGE SCALE GENOMIC DNA]</scope>
    <source>
        <strain>ATCC 700084 / mc(2)155</strain>
    </source>
</reference>
<proteinExistence type="evidence at protein level"/>
<accession>A0QU28</accession>
<accession>I7G5L4</accession>
<evidence type="ECO:0000255" key="1">
    <source>
        <dbReference type="HAMAP-Rule" id="MF_01351"/>
    </source>
</evidence>
<evidence type="ECO:0000256" key="2">
    <source>
        <dbReference type="SAM" id="MobiDB-lite"/>
    </source>
</evidence>
<evidence type="ECO:0007829" key="3">
    <source>
        <dbReference type="PDB" id="8E9G"/>
    </source>
</evidence>
<feature type="chain" id="PRO_0000298514" description="NADH-quinone oxidoreductase subunit I">
    <location>
        <begin position="1"/>
        <end position="180"/>
    </location>
</feature>
<feature type="domain" description="4Fe-4S ferredoxin-type 1" evidence="1">
    <location>
        <begin position="44"/>
        <end position="74"/>
    </location>
</feature>
<feature type="domain" description="4Fe-4S ferredoxin-type 2" evidence="1">
    <location>
        <begin position="90"/>
        <end position="119"/>
    </location>
</feature>
<feature type="region of interest" description="Disordered" evidence="2">
    <location>
        <begin position="145"/>
        <end position="180"/>
    </location>
</feature>
<feature type="binding site" evidence="1">
    <location>
        <position position="54"/>
    </location>
    <ligand>
        <name>[4Fe-4S] cluster</name>
        <dbReference type="ChEBI" id="CHEBI:49883"/>
        <label>1</label>
    </ligand>
</feature>
<feature type="binding site" evidence="1">
    <location>
        <position position="57"/>
    </location>
    <ligand>
        <name>[4Fe-4S] cluster</name>
        <dbReference type="ChEBI" id="CHEBI:49883"/>
        <label>1</label>
    </ligand>
</feature>
<feature type="binding site" evidence="1">
    <location>
        <position position="60"/>
    </location>
    <ligand>
        <name>[4Fe-4S] cluster</name>
        <dbReference type="ChEBI" id="CHEBI:49883"/>
        <label>1</label>
    </ligand>
</feature>
<feature type="binding site" evidence="1">
    <location>
        <position position="64"/>
    </location>
    <ligand>
        <name>[4Fe-4S] cluster</name>
        <dbReference type="ChEBI" id="CHEBI:49883"/>
        <label>2</label>
    </ligand>
</feature>
<feature type="binding site" evidence="1">
    <location>
        <position position="99"/>
    </location>
    <ligand>
        <name>[4Fe-4S] cluster</name>
        <dbReference type="ChEBI" id="CHEBI:49883"/>
        <label>2</label>
    </ligand>
</feature>
<feature type="binding site" evidence="1">
    <location>
        <position position="102"/>
    </location>
    <ligand>
        <name>[4Fe-4S] cluster</name>
        <dbReference type="ChEBI" id="CHEBI:49883"/>
        <label>2</label>
    </ligand>
</feature>
<feature type="binding site" evidence="1">
    <location>
        <position position="105"/>
    </location>
    <ligand>
        <name>[4Fe-4S] cluster</name>
        <dbReference type="ChEBI" id="CHEBI:49883"/>
        <label>2</label>
    </ligand>
</feature>
<feature type="binding site" evidence="1">
    <location>
        <position position="109"/>
    </location>
    <ligand>
        <name>[4Fe-4S] cluster</name>
        <dbReference type="ChEBI" id="CHEBI:49883"/>
        <label>1</label>
    </ligand>
</feature>
<feature type="helix" evidence="3">
    <location>
        <begin position="5"/>
        <end position="8"/>
    </location>
</feature>
<feature type="helix" evidence="3">
    <location>
        <begin position="9"/>
        <end position="19"/>
    </location>
</feature>
<feature type="turn" evidence="3">
    <location>
        <begin position="27"/>
        <end position="29"/>
    </location>
</feature>
<feature type="strand" evidence="3">
    <location>
        <begin position="42"/>
        <end position="44"/>
    </location>
</feature>
<feature type="helix" evidence="3">
    <location>
        <begin position="59"/>
        <end position="63"/>
    </location>
</feature>
<feature type="strand" evidence="3">
    <location>
        <begin position="69"/>
        <end position="75"/>
    </location>
</feature>
<feature type="strand" evidence="3">
    <location>
        <begin position="83"/>
        <end position="95"/>
    </location>
</feature>
<feature type="turn" evidence="3">
    <location>
        <begin position="96"/>
        <end position="98"/>
    </location>
</feature>
<feature type="helix" evidence="3">
    <location>
        <begin position="104"/>
        <end position="108"/>
    </location>
</feature>
<feature type="strand" evidence="3">
    <location>
        <begin position="110"/>
        <end position="112"/>
    </location>
</feature>
<feature type="strand" evidence="3">
    <location>
        <begin position="114"/>
        <end position="116"/>
    </location>
</feature>
<feature type="strand" evidence="3">
    <location>
        <begin position="124"/>
        <end position="126"/>
    </location>
</feature>
<feature type="helix" evidence="3">
    <location>
        <begin position="128"/>
        <end position="130"/>
    </location>
</feature>
<feature type="helix" evidence="3">
    <location>
        <begin position="134"/>
        <end position="137"/>
    </location>
</feature>
<feature type="strand" evidence="3">
    <location>
        <begin position="148"/>
        <end position="150"/>
    </location>
</feature>
<feature type="helix" evidence="3">
    <location>
        <begin position="158"/>
        <end position="163"/>
    </location>
</feature>